<feature type="chain" id="PRO_0000316679" description="Putative phosphoenolpyruvate synthase regulatory protein">
    <location>
        <begin position="1"/>
        <end position="272"/>
    </location>
</feature>
<feature type="binding site" evidence="1">
    <location>
        <begin position="152"/>
        <end position="159"/>
    </location>
    <ligand>
        <name>ADP</name>
        <dbReference type="ChEBI" id="CHEBI:456216"/>
    </ligand>
</feature>
<evidence type="ECO:0000255" key="1">
    <source>
        <dbReference type="HAMAP-Rule" id="MF_01062"/>
    </source>
</evidence>
<sequence>MKRTAFFISDGTGITAEALGQSLLAQFEFIEFEKITLPYIDSLEKARKAVARIDKASEIDGNKPVIFDTIVNSEIRAEIRKSQGYMIDIFGTFLEPLEQELGSKSTYTVGKSHSIVSNSSYNRRIDAMNYALENDDGARVRYYNEADIILVGVSRSGKTPTCIYLALQYGIKAANFPLTEDDILDQRLPESLRSYREKIFGLTIDPERLAVIRNERKPNSKYASIKQCNYEVEEVELMYRRERIPYLNSTDYSVEEISTRIMMMTGIERHIR</sequence>
<name>PSRP_HAHCH</name>
<gene>
    <name type="ordered locus">HCH_02122</name>
</gene>
<organism>
    <name type="scientific">Hahella chejuensis (strain KCTC 2396)</name>
    <dbReference type="NCBI Taxonomy" id="349521"/>
    <lineage>
        <taxon>Bacteria</taxon>
        <taxon>Pseudomonadati</taxon>
        <taxon>Pseudomonadota</taxon>
        <taxon>Gammaproteobacteria</taxon>
        <taxon>Oceanospirillales</taxon>
        <taxon>Hahellaceae</taxon>
        <taxon>Hahella</taxon>
    </lineage>
</organism>
<dbReference type="EC" id="2.7.11.33" evidence="1"/>
<dbReference type="EC" id="2.7.4.28" evidence="1"/>
<dbReference type="EMBL" id="CP000155">
    <property type="protein sequence ID" value="ABC28951.1"/>
    <property type="molecule type" value="Genomic_DNA"/>
</dbReference>
<dbReference type="RefSeq" id="WP_011396022.1">
    <property type="nucleotide sequence ID" value="NC_007645.1"/>
</dbReference>
<dbReference type="SMR" id="Q2SK73"/>
<dbReference type="STRING" id="349521.HCH_02122"/>
<dbReference type="KEGG" id="hch:HCH_02122"/>
<dbReference type="eggNOG" id="COG1806">
    <property type="taxonomic scope" value="Bacteria"/>
</dbReference>
<dbReference type="HOGENOM" id="CLU_046206_1_0_6"/>
<dbReference type="OrthoDB" id="9782201at2"/>
<dbReference type="Proteomes" id="UP000000238">
    <property type="component" value="Chromosome"/>
</dbReference>
<dbReference type="GO" id="GO:0043531">
    <property type="term" value="F:ADP binding"/>
    <property type="evidence" value="ECO:0007669"/>
    <property type="project" value="UniProtKB-UniRule"/>
</dbReference>
<dbReference type="GO" id="GO:0005524">
    <property type="term" value="F:ATP binding"/>
    <property type="evidence" value="ECO:0007669"/>
    <property type="project" value="InterPro"/>
</dbReference>
<dbReference type="GO" id="GO:0016776">
    <property type="term" value="F:phosphotransferase activity, phosphate group as acceptor"/>
    <property type="evidence" value="ECO:0007669"/>
    <property type="project" value="UniProtKB-UniRule"/>
</dbReference>
<dbReference type="GO" id="GO:0004674">
    <property type="term" value="F:protein serine/threonine kinase activity"/>
    <property type="evidence" value="ECO:0007669"/>
    <property type="project" value="UniProtKB-UniRule"/>
</dbReference>
<dbReference type="HAMAP" id="MF_01062">
    <property type="entry name" value="PSRP"/>
    <property type="match status" value="1"/>
</dbReference>
<dbReference type="InterPro" id="IPR005177">
    <property type="entry name" value="Kinase-pyrophosphorylase"/>
</dbReference>
<dbReference type="InterPro" id="IPR026530">
    <property type="entry name" value="PSRP"/>
</dbReference>
<dbReference type="NCBIfam" id="NF003742">
    <property type="entry name" value="PRK05339.1"/>
    <property type="match status" value="1"/>
</dbReference>
<dbReference type="PANTHER" id="PTHR31756">
    <property type="entry name" value="PYRUVATE, PHOSPHATE DIKINASE REGULATORY PROTEIN 1, CHLOROPLASTIC"/>
    <property type="match status" value="1"/>
</dbReference>
<dbReference type="PANTHER" id="PTHR31756:SF3">
    <property type="entry name" value="PYRUVATE, PHOSPHATE DIKINASE REGULATORY PROTEIN 1, CHLOROPLASTIC"/>
    <property type="match status" value="1"/>
</dbReference>
<dbReference type="Pfam" id="PF03618">
    <property type="entry name" value="Kinase-PPPase"/>
    <property type="match status" value="1"/>
</dbReference>
<protein>
    <recommendedName>
        <fullName evidence="1">Putative phosphoenolpyruvate synthase regulatory protein</fullName>
        <shortName evidence="1">PEP synthase regulatory protein</shortName>
        <shortName evidence="1">PSRP</shortName>
        <ecNumber evidence="1">2.7.11.33</ecNumber>
        <ecNumber evidence="1">2.7.4.28</ecNumber>
    </recommendedName>
    <alternativeName>
        <fullName evidence="1">Pyruvate, water dikinase regulatory protein</fullName>
    </alternativeName>
</protein>
<proteinExistence type="inferred from homology"/>
<accession>Q2SK73</accession>
<reference key="1">
    <citation type="journal article" date="2005" name="Nucleic Acids Res.">
        <title>Genomic blueprint of Hahella chejuensis, a marine microbe producing an algicidal agent.</title>
        <authorList>
            <person name="Jeong H."/>
            <person name="Yim J.H."/>
            <person name="Lee C."/>
            <person name="Choi S.-H."/>
            <person name="Park Y.K."/>
            <person name="Yoon S.H."/>
            <person name="Hur C.-G."/>
            <person name="Kang H.-Y."/>
            <person name="Kim D."/>
            <person name="Lee H.H."/>
            <person name="Park K.H."/>
            <person name="Park S.-H."/>
            <person name="Park H.-S."/>
            <person name="Lee H.K."/>
            <person name="Oh T.K."/>
            <person name="Kim J.F."/>
        </authorList>
    </citation>
    <scope>NUCLEOTIDE SEQUENCE [LARGE SCALE GENOMIC DNA]</scope>
    <source>
        <strain>KCTC 2396</strain>
    </source>
</reference>
<comment type="function">
    <text evidence="1">Bifunctional serine/threonine kinase and phosphorylase involved in the regulation of the phosphoenolpyruvate synthase (PEPS) by catalyzing its phosphorylation/dephosphorylation.</text>
</comment>
<comment type="catalytic activity">
    <reaction evidence="1">
        <text>[pyruvate, water dikinase] + ADP = [pyruvate, water dikinase]-phosphate + AMP + H(+)</text>
        <dbReference type="Rhea" id="RHEA:46020"/>
        <dbReference type="Rhea" id="RHEA-COMP:11425"/>
        <dbReference type="Rhea" id="RHEA-COMP:11426"/>
        <dbReference type="ChEBI" id="CHEBI:15378"/>
        <dbReference type="ChEBI" id="CHEBI:43176"/>
        <dbReference type="ChEBI" id="CHEBI:68546"/>
        <dbReference type="ChEBI" id="CHEBI:456215"/>
        <dbReference type="ChEBI" id="CHEBI:456216"/>
        <dbReference type="EC" id="2.7.11.33"/>
    </reaction>
</comment>
<comment type="catalytic activity">
    <reaction evidence="1">
        <text>[pyruvate, water dikinase]-phosphate + phosphate + H(+) = [pyruvate, water dikinase] + diphosphate</text>
        <dbReference type="Rhea" id="RHEA:48580"/>
        <dbReference type="Rhea" id="RHEA-COMP:11425"/>
        <dbReference type="Rhea" id="RHEA-COMP:11426"/>
        <dbReference type="ChEBI" id="CHEBI:15378"/>
        <dbReference type="ChEBI" id="CHEBI:33019"/>
        <dbReference type="ChEBI" id="CHEBI:43176"/>
        <dbReference type="ChEBI" id="CHEBI:43474"/>
        <dbReference type="ChEBI" id="CHEBI:68546"/>
        <dbReference type="EC" id="2.7.4.28"/>
    </reaction>
</comment>
<comment type="similarity">
    <text evidence="1">Belongs to the pyruvate, phosphate/water dikinase regulatory protein family. PSRP subfamily.</text>
</comment>
<keyword id="KW-0418">Kinase</keyword>
<keyword id="KW-0547">Nucleotide-binding</keyword>
<keyword id="KW-1185">Reference proteome</keyword>
<keyword id="KW-0723">Serine/threonine-protein kinase</keyword>
<keyword id="KW-0808">Transferase</keyword>